<evidence type="ECO:0000255" key="1">
    <source>
        <dbReference type="HAMAP-Rule" id="MF_01315"/>
    </source>
</evidence>
<evidence type="ECO:0000256" key="2">
    <source>
        <dbReference type="SAM" id="MobiDB-lite"/>
    </source>
</evidence>
<evidence type="ECO:0000305" key="3"/>
<reference key="1">
    <citation type="submission" date="2007-05" db="EMBL/GenBank/DDBJ databases">
        <title>Complete sequence of chromosome of Staphylococcus aureus subsp. aureus JH9.</title>
        <authorList>
            <consortium name="US DOE Joint Genome Institute"/>
            <person name="Copeland A."/>
            <person name="Lucas S."/>
            <person name="Lapidus A."/>
            <person name="Barry K."/>
            <person name="Detter J.C."/>
            <person name="Glavina del Rio T."/>
            <person name="Hammon N."/>
            <person name="Israni S."/>
            <person name="Pitluck S."/>
            <person name="Chain P."/>
            <person name="Malfatti S."/>
            <person name="Shin M."/>
            <person name="Vergez L."/>
            <person name="Schmutz J."/>
            <person name="Larimer F."/>
            <person name="Land M."/>
            <person name="Hauser L."/>
            <person name="Kyrpides N."/>
            <person name="Kim E."/>
            <person name="Tomasz A."/>
            <person name="Richardson P."/>
        </authorList>
    </citation>
    <scope>NUCLEOTIDE SEQUENCE [LARGE SCALE GENOMIC DNA]</scope>
    <source>
        <strain>JH9</strain>
    </source>
</reference>
<keyword id="KW-0687">Ribonucleoprotein</keyword>
<keyword id="KW-0689">Ribosomal protein</keyword>
<keyword id="KW-0694">RNA-binding</keyword>
<keyword id="KW-0699">rRNA-binding</keyword>
<keyword id="KW-0820">tRNA-binding</keyword>
<organism>
    <name type="scientific">Staphylococcus aureus (strain JH9)</name>
    <dbReference type="NCBI Taxonomy" id="359786"/>
    <lineage>
        <taxon>Bacteria</taxon>
        <taxon>Bacillati</taxon>
        <taxon>Bacillota</taxon>
        <taxon>Bacilli</taxon>
        <taxon>Bacillales</taxon>
        <taxon>Staphylococcaceae</taxon>
        <taxon>Staphylococcus</taxon>
    </lineage>
</organism>
<proteinExistence type="inferred from homology"/>
<protein>
    <recommendedName>
        <fullName evidence="1">Small ribosomal subunit protein uS13</fullName>
    </recommendedName>
    <alternativeName>
        <fullName evidence="3">30S ribosomal protein S13</fullName>
    </alternativeName>
</protein>
<sequence length="121" mass="13719">MARIAGVDIPREKRVVISLTYIYGIGTSTAQKILEEANVSADTRVKDLTDDELGRIREVVDGYKVEGDLRRETNLNIKRLMEISSYRGIRHRRGLPVRGQKTKNNARTRKGPVKTVANKKK</sequence>
<feature type="chain" id="PRO_1000086264" description="Small ribosomal subunit protein uS13">
    <location>
        <begin position="1"/>
        <end position="121"/>
    </location>
</feature>
<feature type="region of interest" description="Disordered" evidence="2">
    <location>
        <begin position="91"/>
        <end position="121"/>
    </location>
</feature>
<comment type="function">
    <text evidence="1">Located at the top of the head of the 30S subunit, it contacts several helices of the 16S rRNA. In the 70S ribosome it contacts the 23S rRNA (bridge B1a) and protein L5 of the 50S subunit (bridge B1b), connecting the 2 subunits; these bridges are implicated in subunit movement. Contacts the tRNAs in the A and P-sites.</text>
</comment>
<comment type="subunit">
    <text evidence="1">Part of the 30S ribosomal subunit. Forms a loose heterodimer with protein S19. Forms two bridges to the 50S subunit in the 70S ribosome.</text>
</comment>
<comment type="similarity">
    <text evidence="1">Belongs to the universal ribosomal protein uS13 family.</text>
</comment>
<gene>
    <name evidence="1" type="primary">rpsM</name>
    <name type="ordered locus">SaurJH9_2253</name>
</gene>
<name>RS13_STAA9</name>
<dbReference type="EMBL" id="CP000703">
    <property type="protein sequence ID" value="ABQ50033.1"/>
    <property type="molecule type" value="Genomic_DNA"/>
</dbReference>
<dbReference type="RefSeq" id="WP_000090796.1">
    <property type="nucleotide sequence ID" value="NC_009487.1"/>
</dbReference>
<dbReference type="SMR" id="A5IV10"/>
<dbReference type="GeneID" id="66840438"/>
<dbReference type="KEGG" id="saj:SaurJH9_2253"/>
<dbReference type="HOGENOM" id="CLU_103849_1_1_9"/>
<dbReference type="GO" id="GO:0005829">
    <property type="term" value="C:cytosol"/>
    <property type="evidence" value="ECO:0007669"/>
    <property type="project" value="TreeGrafter"/>
</dbReference>
<dbReference type="GO" id="GO:0015935">
    <property type="term" value="C:small ribosomal subunit"/>
    <property type="evidence" value="ECO:0007669"/>
    <property type="project" value="TreeGrafter"/>
</dbReference>
<dbReference type="GO" id="GO:0019843">
    <property type="term" value="F:rRNA binding"/>
    <property type="evidence" value="ECO:0007669"/>
    <property type="project" value="UniProtKB-UniRule"/>
</dbReference>
<dbReference type="GO" id="GO:0003735">
    <property type="term" value="F:structural constituent of ribosome"/>
    <property type="evidence" value="ECO:0007669"/>
    <property type="project" value="InterPro"/>
</dbReference>
<dbReference type="GO" id="GO:0000049">
    <property type="term" value="F:tRNA binding"/>
    <property type="evidence" value="ECO:0007669"/>
    <property type="project" value="UniProtKB-UniRule"/>
</dbReference>
<dbReference type="GO" id="GO:0006412">
    <property type="term" value="P:translation"/>
    <property type="evidence" value="ECO:0007669"/>
    <property type="project" value="UniProtKB-UniRule"/>
</dbReference>
<dbReference type="FunFam" id="1.10.8.50:FF:000001">
    <property type="entry name" value="30S ribosomal protein S13"/>
    <property type="match status" value="1"/>
</dbReference>
<dbReference type="FunFam" id="4.10.910.10:FF:000001">
    <property type="entry name" value="30S ribosomal protein S13"/>
    <property type="match status" value="1"/>
</dbReference>
<dbReference type="Gene3D" id="1.10.8.50">
    <property type="match status" value="1"/>
</dbReference>
<dbReference type="Gene3D" id="4.10.910.10">
    <property type="entry name" value="30s ribosomal protein s13, domain 2"/>
    <property type="match status" value="1"/>
</dbReference>
<dbReference type="HAMAP" id="MF_01315">
    <property type="entry name" value="Ribosomal_uS13"/>
    <property type="match status" value="1"/>
</dbReference>
<dbReference type="InterPro" id="IPR027437">
    <property type="entry name" value="Rbsml_uS13_C"/>
</dbReference>
<dbReference type="InterPro" id="IPR001892">
    <property type="entry name" value="Ribosomal_uS13"/>
</dbReference>
<dbReference type="InterPro" id="IPR010979">
    <property type="entry name" value="Ribosomal_uS13-like_H2TH"/>
</dbReference>
<dbReference type="InterPro" id="IPR019980">
    <property type="entry name" value="Ribosomal_uS13_bac-type"/>
</dbReference>
<dbReference type="InterPro" id="IPR018269">
    <property type="entry name" value="Ribosomal_uS13_CS"/>
</dbReference>
<dbReference type="NCBIfam" id="TIGR03631">
    <property type="entry name" value="uS13_bact"/>
    <property type="match status" value="1"/>
</dbReference>
<dbReference type="PANTHER" id="PTHR10871">
    <property type="entry name" value="30S RIBOSOMAL PROTEIN S13/40S RIBOSOMAL PROTEIN S18"/>
    <property type="match status" value="1"/>
</dbReference>
<dbReference type="PANTHER" id="PTHR10871:SF1">
    <property type="entry name" value="SMALL RIBOSOMAL SUBUNIT PROTEIN US13M"/>
    <property type="match status" value="1"/>
</dbReference>
<dbReference type="Pfam" id="PF00416">
    <property type="entry name" value="Ribosomal_S13"/>
    <property type="match status" value="1"/>
</dbReference>
<dbReference type="PIRSF" id="PIRSF002134">
    <property type="entry name" value="Ribosomal_S13"/>
    <property type="match status" value="1"/>
</dbReference>
<dbReference type="SUPFAM" id="SSF46946">
    <property type="entry name" value="S13-like H2TH domain"/>
    <property type="match status" value="1"/>
</dbReference>
<dbReference type="PROSITE" id="PS00646">
    <property type="entry name" value="RIBOSOMAL_S13_1"/>
    <property type="match status" value="1"/>
</dbReference>
<dbReference type="PROSITE" id="PS50159">
    <property type="entry name" value="RIBOSOMAL_S13_2"/>
    <property type="match status" value="1"/>
</dbReference>
<accession>A5IV10</accession>